<feature type="chain" id="PRO_0000071749" description="V-type proton ATPase 16 kDa proteolipid subunit c">
    <location>
        <begin position="1"/>
        <end position="157"/>
    </location>
</feature>
<feature type="topological domain" description="Lumenal" evidence="4">
    <location>
        <begin position="1"/>
        <end position="10"/>
    </location>
</feature>
<feature type="transmembrane region" description="Helical" evidence="4">
    <location>
        <begin position="11"/>
        <end position="33"/>
    </location>
</feature>
<feature type="topological domain" description="Cytoplasmic" evidence="4">
    <location>
        <begin position="34"/>
        <end position="55"/>
    </location>
</feature>
<feature type="transmembrane region" description="Helical" evidence="4">
    <location>
        <begin position="56"/>
        <end position="76"/>
    </location>
</feature>
<feature type="topological domain" description="Lumenal" evidence="4">
    <location>
        <begin position="77"/>
        <end position="94"/>
    </location>
</feature>
<feature type="transmembrane region" description="Helical" evidence="4">
    <location>
        <begin position="95"/>
        <end position="116"/>
    </location>
</feature>
<feature type="topological domain" description="Cytoplasmic" evidence="4">
    <location>
        <begin position="117"/>
        <end position="128"/>
    </location>
</feature>
<feature type="transmembrane region" description="Helical" evidence="4">
    <location>
        <begin position="129"/>
        <end position="154"/>
    </location>
</feature>
<feature type="topological domain" description="Lumenal" evidence="4">
    <location>
        <begin position="155"/>
        <end position="157"/>
    </location>
</feature>
<feature type="site" description="Essential for proton translocation" evidence="3">
    <location>
        <position position="141"/>
    </location>
</feature>
<feature type="sequence conflict" description="In Ref. 1; AAB71660." evidence="5" ref="1">
    <original>N</original>
    <variation>K</variation>
    <location>
        <position position="7"/>
    </location>
</feature>
<feature type="sequence conflict" description="In Ref. 1; AAB71660." evidence="5" ref="1">
    <original>F</original>
    <variation>I</variation>
    <location>
        <position position="103"/>
    </location>
</feature>
<reference key="1">
    <citation type="journal article" date="1998" name="Arch. Insect Biochem. Physiol.">
        <title>Isolation of the V-ATPase A and c subunit cDNAs from mosquito midgut and Malpighian tubules.</title>
        <authorList>
            <person name="Gill S.S."/>
            <person name="Chu P.B."/>
            <person name="Smethurst P."/>
            <person name="Pietrantonio P.V."/>
            <person name="Ross L.S."/>
        </authorList>
    </citation>
    <scope>NUCLEOTIDE SEQUENCE [MRNA]</scope>
</reference>
<reference key="2">
    <citation type="journal article" date="2007" name="Science">
        <title>Genome sequence of Aedes aegypti, a major arbovirus vector.</title>
        <authorList>
            <person name="Nene V."/>
            <person name="Wortman J.R."/>
            <person name="Lawson D."/>
            <person name="Haas B.J."/>
            <person name="Kodira C.D."/>
            <person name="Tu Z.J."/>
            <person name="Loftus B.J."/>
            <person name="Xi Z."/>
            <person name="Megy K."/>
            <person name="Grabherr M."/>
            <person name="Ren Q."/>
            <person name="Zdobnov E.M."/>
            <person name="Lobo N.F."/>
            <person name="Campbell K.S."/>
            <person name="Brown S.E."/>
            <person name="Bonaldo M.F."/>
            <person name="Zhu J."/>
            <person name="Sinkins S.P."/>
            <person name="Hogenkamp D.G."/>
            <person name="Amedeo P."/>
            <person name="Arensburger P."/>
            <person name="Atkinson P.W."/>
            <person name="Bidwell S.L."/>
            <person name="Biedler J."/>
            <person name="Birney E."/>
            <person name="Bruggner R.V."/>
            <person name="Costas J."/>
            <person name="Coy M.R."/>
            <person name="Crabtree J."/>
            <person name="Crawford M."/>
            <person name="DeBruyn B."/>
            <person name="DeCaprio D."/>
            <person name="Eiglmeier K."/>
            <person name="Eisenstadt E."/>
            <person name="El-Dorry H."/>
            <person name="Gelbart W.M."/>
            <person name="Gomes S.L."/>
            <person name="Hammond M."/>
            <person name="Hannick L.I."/>
            <person name="Hogan J.R."/>
            <person name="Holmes M.H."/>
            <person name="Jaffe D."/>
            <person name="Johnston S.J."/>
            <person name="Kennedy R.C."/>
            <person name="Koo H."/>
            <person name="Kravitz S."/>
            <person name="Kriventseva E.V."/>
            <person name="Kulp D."/>
            <person name="Labutti K."/>
            <person name="Lee E."/>
            <person name="Li S."/>
            <person name="Lovin D.D."/>
            <person name="Mao C."/>
            <person name="Mauceli E."/>
            <person name="Menck C.F."/>
            <person name="Miller J.R."/>
            <person name="Montgomery P."/>
            <person name="Mori A."/>
            <person name="Nascimento A.L."/>
            <person name="Naveira H.F."/>
            <person name="Nusbaum C."/>
            <person name="O'Leary S.B."/>
            <person name="Orvis J."/>
            <person name="Pertea M."/>
            <person name="Quesneville H."/>
            <person name="Reidenbach K.R."/>
            <person name="Rogers Y.-H.C."/>
            <person name="Roth C.W."/>
            <person name="Schneider J.R."/>
            <person name="Schatz M."/>
            <person name="Shumway M."/>
            <person name="Stanke M."/>
            <person name="Stinson E.O."/>
            <person name="Tubio J.M.C."/>
            <person name="Vanzee J.P."/>
            <person name="Verjovski-Almeida S."/>
            <person name="Werner D."/>
            <person name="White O.R."/>
            <person name="Wyder S."/>
            <person name="Zeng Q."/>
            <person name="Zhao Q."/>
            <person name="Zhao Y."/>
            <person name="Hill C.A."/>
            <person name="Raikhel A.S."/>
            <person name="Soares M.B."/>
            <person name="Knudson D.L."/>
            <person name="Lee N.H."/>
            <person name="Galagan J."/>
            <person name="Salzberg S.L."/>
            <person name="Paulsen I.T."/>
            <person name="Dimopoulos G."/>
            <person name="Collins F.H."/>
            <person name="Bruce B."/>
            <person name="Fraser-Liggett C.M."/>
            <person name="Severson D.W."/>
        </authorList>
    </citation>
    <scope>NUCLEOTIDE SEQUENCE [LARGE SCALE GENOMIC DNA]</scope>
    <source>
        <strain>LVPib12</strain>
    </source>
</reference>
<protein>
    <recommendedName>
        <fullName evidence="5">V-type proton ATPase 16 kDa proteolipid subunit c</fullName>
        <shortName evidence="5">V-ATPase 16 kDa proteolipid subunit c</shortName>
    </recommendedName>
    <alternativeName>
        <fullName evidence="5">V-ATPase subunit c</fullName>
    </alternativeName>
    <alternativeName>
        <fullName evidence="5">Vacuolar proton pump 16 kDa proteolipid subunit c</fullName>
    </alternativeName>
</protein>
<evidence type="ECO:0000250" key="1">
    <source>
        <dbReference type="UniProtKB" id="P23380"/>
    </source>
</evidence>
<evidence type="ECO:0000250" key="2">
    <source>
        <dbReference type="UniProtKB" id="P27449"/>
    </source>
</evidence>
<evidence type="ECO:0000250" key="3">
    <source>
        <dbReference type="UniProtKB" id="P63081"/>
    </source>
</evidence>
<evidence type="ECO:0000255" key="4"/>
<evidence type="ECO:0000305" key="5"/>
<accession>O16110</accession>
<accession>Q17PR4</accession>
<sequence length="157" mass="16045">MALPEENPVYGPFFGVMGAAAAIIFSALGAAYGTAKSGTGIAAMSVMRPELIMKSIIPVVMAGIIAIYGLVVAVLIAGSLDTPTKYSLYKGFIHLGAGLAVGFSGLAAGFAIGIVGDAGVRGTAQQPRLFVGMILILIFAEVLGLYGLIVAIYLYTK</sequence>
<proteinExistence type="evidence at transcript level"/>
<comment type="function">
    <text evidence="1 2">Proton-conducting pore forming subunit of the V0 complex of vacuolar(H+)-ATPase (V-ATPase), a multisubunit enzyme composed of a peripheral complex (V1) that hydrolyzes ATP and a membrane integral complex (V0) that translocates protons (By similarity). V-ATPase is responsible for acidifying and maintaining the pH of intracellular compartments and in some cell types, is targeted to the plasma membrane, where it is responsible for acidifying the extracellular environment (By similarity).</text>
</comment>
<comment type="subunit">
    <text evidence="2">V-ATPase is a heteromultimeric enzyme made up of two complexes: the ATP-hydrolytic V1 complex and the proton translocation V0 complex (By similarity). The V1 complex consists of three catalytic AB heterodimers that form a heterohexamer, three peripheral stalks each consisting of EG heterodimers, one central rotor including subunits D and F, and the regulatory subunits C and H (By similarity). The proton translocation complex V0 consists of the proton transport subunit a, a ring of proteolipid subunits c9c'', rotary subunit d, subunits e and f, and the accessory subunits VhaAC45 and ATP6AP2 (By similarity).</text>
</comment>
<comment type="subcellular location">
    <subcellularLocation>
        <location evidence="4">Membrane</location>
        <topology evidence="4">Multi-pass membrane protein</topology>
    </subcellularLocation>
</comment>
<comment type="similarity">
    <text evidence="5">Belongs to the V-ATPase proteolipid subunit family.</text>
</comment>
<organism>
    <name type="scientific">Aedes aegypti</name>
    <name type="common">Yellowfever mosquito</name>
    <name type="synonym">Culex aegypti</name>
    <dbReference type="NCBI Taxonomy" id="7159"/>
    <lineage>
        <taxon>Eukaryota</taxon>
        <taxon>Metazoa</taxon>
        <taxon>Ecdysozoa</taxon>
        <taxon>Arthropoda</taxon>
        <taxon>Hexapoda</taxon>
        <taxon>Insecta</taxon>
        <taxon>Pterygota</taxon>
        <taxon>Neoptera</taxon>
        <taxon>Endopterygota</taxon>
        <taxon>Diptera</taxon>
        <taxon>Nematocera</taxon>
        <taxon>Culicoidea</taxon>
        <taxon>Culicidae</taxon>
        <taxon>Culicinae</taxon>
        <taxon>Aedini</taxon>
        <taxon>Aedes</taxon>
        <taxon>Stegomyia</taxon>
    </lineage>
</organism>
<dbReference type="EMBL" id="AF008924">
    <property type="protein sequence ID" value="AAB71660.1"/>
    <property type="molecule type" value="mRNA"/>
</dbReference>
<dbReference type="EMBL" id="CH477190">
    <property type="protein sequence ID" value="EAT48687.1"/>
    <property type="molecule type" value="Genomic_DNA"/>
</dbReference>
<dbReference type="SMR" id="O16110"/>
<dbReference type="FunCoup" id="O16110">
    <property type="interactions" value="1214"/>
</dbReference>
<dbReference type="STRING" id="7159.O16110"/>
<dbReference type="PaxDb" id="7159-AAEL000291-PA"/>
<dbReference type="EnsemblMetazoa" id="AAEL000291-RA">
    <property type="protein sequence ID" value="AAEL000291-PA"/>
    <property type="gene ID" value="AAEL000291"/>
</dbReference>
<dbReference type="GeneID" id="5573732"/>
<dbReference type="KEGG" id="aag:5573732"/>
<dbReference type="CTD" id="44307"/>
<dbReference type="VEuPathDB" id="VectorBase:AAEL000291"/>
<dbReference type="eggNOG" id="KOG0232">
    <property type="taxonomic scope" value="Eukaryota"/>
</dbReference>
<dbReference type="HOGENOM" id="CLU_085752_1_2_1"/>
<dbReference type="InParanoid" id="O16110"/>
<dbReference type="OMA" id="MGVMKPD"/>
<dbReference type="OrthoDB" id="1744869at2759"/>
<dbReference type="PhylomeDB" id="O16110"/>
<dbReference type="Proteomes" id="UP000008820">
    <property type="component" value="Chromosome 3"/>
</dbReference>
<dbReference type="Proteomes" id="UP000682892">
    <property type="component" value="Unassembled WGS sequence"/>
</dbReference>
<dbReference type="GO" id="GO:0033179">
    <property type="term" value="C:proton-transporting V-type ATPase, V0 domain"/>
    <property type="evidence" value="ECO:0007669"/>
    <property type="project" value="InterPro"/>
</dbReference>
<dbReference type="GO" id="GO:0046961">
    <property type="term" value="F:proton-transporting ATPase activity, rotational mechanism"/>
    <property type="evidence" value="ECO:0007669"/>
    <property type="project" value="InterPro"/>
</dbReference>
<dbReference type="CDD" id="cd18175">
    <property type="entry name" value="ATP-synt_Vo_c_ATP6C_rpt1"/>
    <property type="match status" value="1"/>
</dbReference>
<dbReference type="CDD" id="cd18176">
    <property type="entry name" value="ATP-synt_Vo_c_ATP6C_rpt2"/>
    <property type="match status" value="1"/>
</dbReference>
<dbReference type="FunFam" id="1.20.120.610:FF:000001">
    <property type="entry name" value="V-type proton ATPase proteolipid subunit"/>
    <property type="match status" value="1"/>
</dbReference>
<dbReference type="Gene3D" id="1.20.120.610">
    <property type="entry name" value="lithium bound rotor ring of v- atpase"/>
    <property type="match status" value="1"/>
</dbReference>
<dbReference type="InterPro" id="IPR002379">
    <property type="entry name" value="ATPase_proteolipid_c-like_dom"/>
</dbReference>
<dbReference type="InterPro" id="IPR000245">
    <property type="entry name" value="ATPase_proteolipid_csu"/>
</dbReference>
<dbReference type="InterPro" id="IPR011555">
    <property type="entry name" value="ATPase_proteolipid_su_C_euk"/>
</dbReference>
<dbReference type="InterPro" id="IPR035921">
    <property type="entry name" value="F/V-ATP_Csub_sf"/>
</dbReference>
<dbReference type="NCBIfam" id="TIGR01100">
    <property type="entry name" value="V_ATP_synt_C"/>
    <property type="match status" value="1"/>
</dbReference>
<dbReference type="PANTHER" id="PTHR10263">
    <property type="entry name" value="V-TYPE PROTON ATPASE PROTEOLIPID SUBUNIT"/>
    <property type="match status" value="1"/>
</dbReference>
<dbReference type="Pfam" id="PF00137">
    <property type="entry name" value="ATP-synt_C"/>
    <property type="match status" value="2"/>
</dbReference>
<dbReference type="PRINTS" id="PR00122">
    <property type="entry name" value="VACATPASE"/>
</dbReference>
<dbReference type="SUPFAM" id="SSF81333">
    <property type="entry name" value="F1F0 ATP synthase subunit C"/>
    <property type="match status" value="2"/>
</dbReference>
<name>VATL_AEDAE</name>
<keyword id="KW-0375">Hydrogen ion transport</keyword>
<keyword id="KW-0406">Ion transport</keyword>
<keyword id="KW-0472">Membrane</keyword>
<keyword id="KW-1185">Reference proteome</keyword>
<keyword id="KW-0812">Transmembrane</keyword>
<keyword id="KW-1133">Transmembrane helix</keyword>
<keyword id="KW-0813">Transport</keyword>
<gene>
    <name type="ORF">AAEL000291</name>
</gene>